<keyword id="KW-0378">Hydrolase</keyword>
<keyword id="KW-0904">Protein phosphatase</keyword>
<keyword id="KW-1185">Reference proteome</keyword>
<gene>
    <name type="primary">FH3</name>
    <name type="ordered locus">Os10g0119300</name>
    <name type="ordered locus">LOC_Os10g02980</name>
    <name type="ORF">OSJNAa0079B05.2</name>
    <name type="ORF">OSJNBa0079B05.10</name>
</gene>
<evidence type="ECO:0000255" key="1">
    <source>
        <dbReference type="PROSITE-ProRule" id="PRU00589"/>
    </source>
</evidence>
<evidence type="ECO:0000255" key="2">
    <source>
        <dbReference type="PROSITE-ProRule" id="PRU00590"/>
    </source>
</evidence>
<evidence type="ECO:0000255" key="3">
    <source>
        <dbReference type="PROSITE-ProRule" id="PRU00774"/>
    </source>
</evidence>
<evidence type="ECO:0000256" key="4">
    <source>
        <dbReference type="SAM" id="MobiDB-lite"/>
    </source>
</evidence>
<evidence type="ECO:0000305" key="5"/>
<reference key="1">
    <citation type="journal article" date="2003" name="Science">
        <title>In-depth view of structure, activity, and evolution of rice chromosome 10.</title>
        <authorList>
            <person name="Yu Y."/>
            <person name="Rambo T."/>
            <person name="Currie J."/>
            <person name="Saski C."/>
            <person name="Kim H.-R."/>
            <person name="Collura K."/>
            <person name="Thompson S."/>
            <person name="Simmons J."/>
            <person name="Yang T.-J."/>
            <person name="Nah G."/>
            <person name="Patel A.J."/>
            <person name="Thurmond S."/>
            <person name="Henry D."/>
            <person name="Oates R."/>
            <person name="Palmer M."/>
            <person name="Pries G."/>
            <person name="Gibson J."/>
            <person name="Anderson H."/>
            <person name="Paradkar M."/>
            <person name="Crane L."/>
            <person name="Dale J."/>
            <person name="Carver M.B."/>
            <person name="Wood T."/>
            <person name="Frisch D."/>
            <person name="Engler F."/>
            <person name="Soderlund C."/>
            <person name="Palmer L.E."/>
            <person name="Teytelman L."/>
            <person name="Nascimento L."/>
            <person name="De la Bastide M."/>
            <person name="Spiegel L."/>
            <person name="Ware D."/>
            <person name="O'Shaughnessy A."/>
            <person name="Dike S."/>
            <person name="Dedhia N."/>
            <person name="Preston R."/>
            <person name="Huang E."/>
            <person name="Ferraro K."/>
            <person name="Kuit K."/>
            <person name="Miller B."/>
            <person name="Zutavern T."/>
            <person name="Katzenberger F."/>
            <person name="Muller S."/>
            <person name="Balija V."/>
            <person name="Martienssen R.A."/>
            <person name="Stein L."/>
            <person name="Minx P."/>
            <person name="Johnson D."/>
            <person name="Cordum H."/>
            <person name="Mardis E."/>
            <person name="Cheng Z."/>
            <person name="Jiang J."/>
            <person name="Wilson R."/>
            <person name="McCombie W.R."/>
            <person name="Wing R.A."/>
            <person name="Yuan Q."/>
            <person name="Ouyang S."/>
            <person name="Liu J."/>
            <person name="Jones K.M."/>
            <person name="Gansberger K."/>
            <person name="Moffat K."/>
            <person name="Hill J."/>
            <person name="Tsitrin T."/>
            <person name="Overton L."/>
            <person name="Bera J."/>
            <person name="Kim M."/>
            <person name="Jin S."/>
            <person name="Tallon L."/>
            <person name="Ciecko A."/>
            <person name="Pai G."/>
            <person name="Van Aken S."/>
            <person name="Utterback T."/>
            <person name="Reidmuller S."/>
            <person name="Bormann J."/>
            <person name="Feldblyum T."/>
            <person name="Hsiao J."/>
            <person name="Zismann V."/>
            <person name="Blunt S."/>
            <person name="de Vazeille A.R."/>
            <person name="Shaffer T."/>
            <person name="Koo H."/>
            <person name="Suh B."/>
            <person name="Yang Q."/>
            <person name="Haas B."/>
            <person name="Peterson J."/>
            <person name="Pertea M."/>
            <person name="Volfovsky N."/>
            <person name="Wortman J."/>
            <person name="White O."/>
            <person name="Salzberg S.L."/>
            <person name="Fraser C.M."/>
            <person name="Buell C.R."/>
            <person name="Messing J."/>
            <person name="Song R."/>
            <person name="Fuks G."/>
            <person name="Llaca V."/>
            <person name="Kovchak S."/>
            <person name="Young S."/>
            <person name="Bowers J.E."/>
            <person name="Paterson A.H."/>
            <person name="Johns M.A."/>
            <person name="Mao L."/>
            <person name="Pan H."/>
            <person name="Dean R.A."/>
        </authorList>
    </citation>
    <scope>NUCLEOTIDE SEQUENCE [LARGE SCALE GENOMIC DNA]</scope>
    <source>
        <strain>cv. Nipponbare</strain>
    </source>
</reference>
<reference key="2">
    <citation type="journal article" date="2005" name="Nature">
        <title>The map-based sequence of the rice genome.</title>
        <authorList>
            <consortium name="International rice genome sequencing project (IRGSP)"/>
        </authorList>
    </citation>
    <scope>NUCLEOTIDE SEQUENCE [LARGE SCALE GENOMIC DNA]</scope>
    <source>
        <strain>cv. Nipponbare</strain>
    </source>
</reference>
<reference key="3">
    <citation type="journal article" date="2008" name="Nucleic Acids Res.">
        <title>The rice annotation project database (RAP-DB): 2008 update.</title>
        <authorList>
            <consortium name="The rice annotation project (RAP)"/>
        </authorList>
    </citation>
    <scope>GENOME REANNOTATION</scope>
    <source>
        <strain>cv. Nipponbare</strain>
    </source>
</reference>
<reference key="4">
    <citation type="journal article" date="2013" name="Rice">
        <title>Improvement of the Oryza sativa Nipponbare reference genome using next generation sequence and optical map data.</title>
        <authorList>
            <person name="Kawahara Y."/>
            <person name="de la Bastide M."/>
            <person name="Hamilton J.P."/>
            <person name="Kanamori H."/>
            <person name="McCombie W.R."/>
            <person name="Ouyang S."/>
            <person name="Schwartz D.C."/>
            <person name="Tanaka T."/>
            <person name="Wu J."/>
            <person name="Zhou S."/>
            <person name="Childs K.L."/>
            <person name="Davidson R.M."/>
            <person name="Lin H."/>
            <person name="Quesada-Ocampo L."/>
            <person name="Vaillancourt B."/>
            <person name="Sakai H."/>
            <person name="Lee S.S."/>
            <person name="Kim J."/>
            <person name="Numa H."/>
            <person name="Itoh T."/>
            <person name="Buell C.R."/>
            <person name="Matsumoto T."/>
        </authorList>
    </citation>
    <scope>GENOME REANNOTATION</scope>
    <source>
        <strain>cv. Nipponbare</strain>
    </source>
</reference>
<reference key="5">
    <citation type="journal article" date="2003" name="Science">
        <title>Collection, mapping, and annotation of over 28,000 cDNA clones from japonica rice.</title>
        <authorList>
            <consortium name="The rice full-length cDNA consortium"/>
        </authorList>
    </citation>
    <scope>NUCLEOTIDE SEQUENCE [LARGE SCALE MRNA] OF 818-1234</scope>
    <source>
        <strain>cv. Nipponbare</strain>
    </source>
</reference>
<reference key="6">
    <citation type="journal article" date="2004" name="BMC Genomics">
        <title>Formin homology 2 domains occur in multiple contexts in angiosperms.</title>
        <authorList>
            <person name="Cvrckova F."/>
            <person name="Novotny M."/>
            <person name="Pickova D."/>
            <person name="Zarsky V."/>
        </authorList>
    </citation>
    <scope>GENE FAMILY</scope>
    <scope>NOMENCLATURE</scope>
</reference>
<proteinExistence type="evidence at transcript level"/>
<sequence>MRLDSFPASISVPYEVRSGFQAQGGLPSPSGHTSLRVSVFDSCFCTEVLPHGMYPVYLTGILTDLHEEHSQSSFLGINFRDGDKRSQLADVLREYNVPVIDYPRHFEGCPVLPLSLIQHFLRVCEHWLSTGNNQNIILLHCERGGWPSLAFMLSCLLIFKKLQSAEHKTLDLIYREAPKGFLQLFSALNPMPSQLRYLQYVARRNISPEWPPMERALSFDCLILRAIPSFDSDNGCRPLVRIFGRNIIGKNASTSNMIFSMPKKKTLRHYRQEDCDVIKIDIQCPVQGDVVLECVHLDLDPEKEVMMFRIMFNTAFIRSNVLMLNSDDIDIVWGSKDQYPRNFRAEMLFCELGGISPARPPTATLNGDMKGGLPIEAFSAVQELFNGVDWMESSDNAAFWLLKEFSANSLQEKFQKLILSDMEELSKFQAKVGLQIPLMSPLDSDEEKYSVASDSVSSSEHEKVQPGGNSSDSENINHDLTTEDTASMGNVLVNTPSVLPPTTPPPCGSLSILSTDENQLPPEVQHESPSDRKLPSPSPTAAAPPPPPPPPPPPSGNKPAFSPPPPPPPPPPPPLPQSNYASSQPPPPPPPPPLPNCLVPSPPPPPPPPPILPNRSVPPPPPPPPPLPNHSVLPPPPPPPPPPSLPNRLVPPPPAPGIGNKFPAPPPPPPPPRSSSRTPTGAATSSKGPPPPPPPPLPPANRTNGPGVPSAPPPPPPPPPANRSNGPSAPAPPLPPPLPAAANKRNPPAPPPPPLMTGKKAPAPPPPPPQAPKPPGTVPPPPPLHGASGRPHPPSSKGLNAPAPPPLLGRGREATGSAKGRGIGLAQQSNPPKKASLKPLHWVKVTRAMQGSLWEDAQKQGNQARAPDIDLSELESLFSTAVATNASEKGGTKRGSAISKPEIVHLVDMRRANNCEIMLTKIKMPLPDMINAILALDTSVLDNDQVENLIKFCPTKEEIEMLKNYNGNKEMLGKCEQFFLELMKVPRVESKLRVFAFRITFSTQVEELRTNLTTINDATKEVKESLKLRQIMQTILTLGNALNQGTARGSAVGFRLDSLLKLSDTRARNNKMTLMHYLCKLLSEKLPELLDFDKDLIHLEAASKIQLKLLAEEMQAINKGLEKVEQELAASVNDGAISVGFREALKSFLDAAEAEVRSLISLYSEVGRNADSLAQYFGEDPARCPFEQVTSILVIFVNMFKKSRDENARTAELEKKKLEKDKEKATLSAKKVLE</sequence>
<feature type="chain" id="PRO_0000319008" description="Formin-like protein 3">
    <location>
        <begin position="1"/>
        <end position="1234"/>
    </location>
</feature>
<feature type="domain" description="Phosphatase tensin-type" evidence="2">
    <location>
        <begin position="1"/>
        <end position="208"/>
    </location>
</feature>
<feature type="domain" description="C2 tensin-type" evidence="1">
    <location>
        <begin position="214"/>
        <end position="352"/>
    </location>
</feature>
<feature type="domain" description="FH2" evidence="3">
    <location>
        <begin position="827"/>
        <end position="1226"/>
    </location>
</feature>
<feature type="region of interest" description="Disordered" evidence="4">
    <location>
        <begin position="443"/>
        <end position="478"/>
    </location>
</feature>
<feature type="region of interest" description="Disordered" evidence="4">
    <location>
        <begin position="492"/>
        <end position="840"/>
    </location>
</feature>
<feature type="compositionally biased region" description="Pro residues" evidence="4">
    <location>
        <begin position="498"/>
        <end position="507"/>
    </location>
</feature>
<feature type="compositionally biased region" description="Basic and acidic residues" evidence="4">
    <location>
        <begin position="524"/>
        <end position="534"/>
    </location>
</feature>
<feature type="compositionally biased region" description="Pro residues" evidence="4">
    <location>
        <begin position="536"/>
        <end position="576"/>
    </location>
</feature>
<feature type="compositionally biased region" description="Pro residues" evidence="4">
    <location>
        <begin position="584"/>
        <end position="656"/>
    </location>
</feature>
<feature type="compositionally biased region" description="Pro residues" evidence="4">
    <location>
        <begin position="663"/>
        <end position="673"/>
    </location>
</feature>
<feature type="compositionally biased region" description="Pro residues" evidence="4">
    <location>
        <begin position="688"/>
        <end position="699"/>
    </location>
</feature>
<feature type="compositionally biased region" description="Pro residues" evidence="4">
    <location>
        <begin position="709"/>
        <end position="721"/>
    </location>
</feature>
<feature type="compositionally biased region" description="Pro residues" evidence="4">
    <location>
        <begin position="729"/>
        <end position="739"/>
    </location>
</feature>
<feature type="compositionally biased region" description="Pro residues" evidence="4">
    <location>
        <begin position="762"/>
        <end position="784"/>
    </location>
</feature>
<feature type="active site" description="Phosphocysteine intermediate" evidence="2">
    <location>
        <position position="141"/>
    </location>
</feature>
<comment type="similarity">
    <text evidence="5">Belongs to the formin-like family. Class-II subfamily.</text>
</comment>
<comment type="sequence caution" evidence="5">
    <conflict type="erroneous gene model prediction">
        <sequence resource="EMBL-CDS" id="AAL31655"/>
    </conflict>
</comment>
<comment type="sequence caution" evidence="5">
    <conflict type="erroneous gene model prediction">
        <sequence resource="EMBL-CDS" id="AAM08709"/>
    </conflict>
</comment>
<comment type="sequence caution" evidence="5">
    <conflict type="erroneous gene model prediction">
        <sequence resource="EMBL-CDS" id="AAP51898"/>
    </conflict>
</comment>
<comment type="sequence caution" evidence="5">
    <conflict type="erroneous gene model prediction">
        <sequence resource="EMBL-CDS" id="BAF25977"/>
    </conflict>
</comment>
<organism>
    <name type="scientific">Oryza sativa subsp. japonica</name>
    <name type="common">Rice</name>
    <dbReference type="NCBI Taxonomy" id="39947"/>
    <lineage>
        <taxon>Eukaryota</taxon>
        <taxon>Viridiplantae</taxon>
        <taxon>Streptophyta</taxon>
        <taxon>Embryophyta</taxon>
        <taxon>Tracheophyta</taxon>
        <taxon>Spermatophyta</taxon>
        <taxon>Magnoliopsida</taxon>
        <taxon>Liliopsida</taxon>
        <taxon>Poales</taxon>
        <taxon>Poaceae</taxon>
        <taxon>BOP clade</taxon>
        <taxon>Oryzoideae</taxon>
        <taxon>Oryzeae</taxon>
        <taxon>Oryzinae</taxon>
        <taxon>Oryza</taxon>
        <taxon>Oryza sativa</taxon>
    </lineage>
</organism>
<accession>Q7G6K7</accession>
<accession>Q0IZ88</accession>
<accession>Q7XH56</accession>
<accession>Q8W5K6</accession>
<name>FH3_ORYSJ</name>
<dbReference type="EMBL" id="AC079179">
    <property type="protein sequence ID" value="AAL31655.1"/>
    <property type="status" value="ALT_SEQ"/>
    <property type="molecule type" value="Genomic_DNA"/>
</dbReference>
<dbReference type="EMBL" id="AC116601">
    <property type="protein sequence ID" value="AAM08709.1"/>
    <property type="status" value="ALT_SEQ"/>
    <property type="molecule type" value="Genomic_DNA"/>
</dbReference>
<dbReference type="EMBL" id="DP000086">
    <property type="protein sequence ID" value="AAP51898.2"/>
    <property type="status" value="ALT_SEQ"/>
    <property type="molecule type" value="Genomic_DNA"/>
</dbReference>
<dbReference type="EMBL" id="AP008216">
    <property type="protein sequence ID" value="BAF25977.1"/>
    <property type="status" value="ALT_SEQ"/>
    <property type="molecule type" value="Genomic_DNA"/>
</dbReference>
<dbReference type="EMBL" id="AP014966">
    <property type="status" value="NOT_ANNOTATED_CDS"/>
    <property type="molecule type" value="Genomic_DNA"/>
</dbReference>
<dbReference type="EMBL" id="AK063350">
    <property type="status" value="NOT_ANNOTATED_CDS"/>
    <property type="molecule type" value="mRNA"/>
</dbReference>
<dbReference type="SMR" id="Q7G6K7"/>
<dbReference type="FunCoup" id="Q7G6K7">
    <property type="interactions" value="314"/>
</dbReference>
<dbReference type="STRING" id="39947.Q7G6K7"/>
<dbReference type="PaxDb" id="39947-Q7G6K7"/>
<dbReference type="KEGG" id="dosa:Os10g0119300"/>
<dbReference type="eggNOG" id="ENOG502QQEE">
    <property type="taxonomic scope" value="Eukaryota"/>
</dbReference>
<dbReference type="HOGENOM" id="CLU_028505_0_0_1"/>
<dbReference type="InParanoid" id="Q7G6K7"/>
<dbReference type="Proteomes" id="UP000000763">
    <property type="component" value="Chromosome 10"/>
</dbReference>
<dbReference type="Proteomes" id="UP000059680">
    <property type="component" value="Chromosome 10"/>
</dbReference>
<dbReference type="GO" id="GO:0004721">
    <property type="term" value="F:phosphoprotein phosphatase activity"/>
    <property type="evidence" value="ECO:0007669"/>
    <property type="project" value="UniProtKB-KW"/>
</dbReference>
<dbReference type="FunFam" id="1.20.58.2220:FF:000020">
    <property type="entry name" value="Formin-like protein"/>
    <property type="match status" value="1"/>
</dbReference>
<dbReference type="Gene3D" id="2.60.40.1110">
    <property type="match status" value="1"/>
</dbReference>
<dbReference type="Gene3D" id="1.20.58.2220">
    <property type="entry name" value="Formin, FH2 domain"/>
    <property type="match status" value="1"/>
</dbReference>
<dbReference type="Gene3D" id="3.90.190.10">
    <property type="entry name" value="Protein tyrosine phosphatase superfamily"/>
    <property type="match status" value="1"/>
</dbReference>
<dbReference type="InterPro" id="IPR035892">
    <property type="entry name" value="C2_domain_sf"/>
</dbReference>
<dbReference type="InterPro" id="IPR015425">
    <property type="entry name" value="FH2_Formin"/>
</dbReference>
<dbReference type="InterPro" id="IPR042201">
    <property type="entry name" value="FH2_Formin_sf"/>
</dbReference>
<dbReference type="InterPro" id="IPR051144">
    <property type="entry name" value="Formin_homology_domain"/>
</dbReference>
<dbReference type="InterPro" id="IPR029021">
    <property type="entry name" value="Prot-tyrosine_phosphatase-like"/>
</dbReference>
<dbReference type="InterPro" id="IPR014020">
    <property type="entry name" value="Tensin_C2-dom"/>
</dbReference>
<dbReference type="PANTHER" id="PTHR45733">
    <property type="entry name" value="FORMIN-J"/>
    <property type="match status" value="1"/>
</dbReference>
<dbReference type="PANTHER" id="PTHR45733:SF17">
    <property type="entry name" value="FORMIN-LIKE PROTEIN 14"/>
    <property type="match status" value="1"/>
</dbReference>
<dbReference type="Pfam" id="PF02181">
    <property type="entry name" value="FH2"/>
    <property type="match status" value="1"/>
</dbReference>
<dbReference type="Pfam" id="PF10409">
    <property type="entry name" value="PTEN_C2"/>
    <property type="match status" value="1"/>
</dbReference>
<dbReference type="SMART" id="SM00498">
    <property type="entry name" value="FH2"/>
    <property type="match status" value="1"/>
</dbReference>
<dbReference type="SMART" id="SM01326">
    <property type="entry name" value="PTEN_C2"/>
    <property type="match status" value="1"/>
</dbReference>
<dbReference type="SUPFAM" id="SSF52799">
    <property type="entry name" value="(Phosphotyrosine protein) phosphatases II"/>
    <property type="match status" value="1"/>
</dbReference>
<dbReference type="SUPFAM" id="SSF49562">
    <property type="entry name" value="C2 domain (Calcium/lipid-binding domain, CaLB)"/>
    <property type="match status" value="1"/>
</dbReference>
<dbReference type="SUPFAM" id="SSF101447">
    <property type="entry name" value="Formin homology 2 domain (FH2 domain)"/>
    <property type="match status" value="1"/>
</dbReference>
<dbReference type="PROSITE" id="PS51182">
    <property type="entry name" value="C2_TENSIN"/>
    <property type="match status" value="1"/>
</dbReference>
<dbReference type="PROSITE" id="PS51444">
    <property type="entry name" value="FH2"/>
    <property type="match status" value="1"/>
</dbReference>
<dbReference type="PROSITE" id="PS51181">
    <property type="entry name" value="PPASE_TENSIN"/>
    <property type="match status" value="1"/>
</dbReference>
<protein>
    <recommendedName>
        <fullName>Formin-like protein 3</fullName>
    </recommendedName>
    <alternativeName>
        <fullName>OsFH3</fullName>
    </alternativeName>
</protein>